<gene>
    <name evidence="1" type="primary">mutS</name>
    <name type="ordered locus">Mmc1_1449</name>
</gene>
<dbReference type="EMBL" id="CP000471">
    <property type="protein sequence ID" value="ABK43958.1"/>
    <property type="molecule type" value="Genomic_DNA"/>
</dbReference>
<dbReference type="RefSeq" id="WP_011713111.1">
    <property type="nucleotide sequence ID" value="NC_008576.1"/>
</dbReference>
<dbReference type="SMR" id="A0L7L5"/>
<dbReference type="STRING" id="156889.Mmc1_1449"/>
<dbReference type="KEGG" id="mgm:Mmc1_1449"/>
<dbReference type="eggNOG" id="COG0249">
    <property type="taxonomic scope" value="Bacteria"/>
</dbReference>
<dbReference type="HOGENOM" id="CLU_002472_4_0_5"/>
<dbReference type="OrthoDB" id="9802448at2"/>
<dbReference type="Proteomes" id="UP000002586">
    <property type="component" value="Chromosome"/>
</dbReference>
<dbReference type="GO" id="GO:0005829">
    <property type="term" value="C:cytosol"/>
    <property type="evidence" value="ECO:0007669"/>
    <property type="project" value="TreeGrafter"/>
</dbReference>
<dbReference type="GO" id="GO:0005524">
    <property type="term" value="F:ATP binding"/>
    <property type="evidence" value="ECO:0007669"/>
    <property type="project" value="UniProtKB-UniRule"/>
</dbReference>
<dbReference type="GO" id="GO:0140664">
    <property type="term" value="F:ATP-dependent DNA damage sensor activity"/>
    <property type="evidence" value="ECO:0007669"/>
    <property type="project" value="InterPro"/>
</dbReference>
<dbReference type="GO" id="GO:0003684">
    <property type="term" value="F:damaged DNA binding"/>
    <property type="evidence" value="ECO:0007669"/>
    <property type="project" value="UniProtKB-UniRule"/>
</dbReference>
<dbReference type="GO" id="GO:0030983">
    <property type="term" value="F:mismatched DNA binding"/>
    <property type="evidence" value="ECO:0007669"/>
    <property type="project" value="InterPro"/>
</dbReference>
<dbReference type="GO" id="GO:0006298">
    <property type="term" value="P:mismatch repair"/>
    <property type="evidence" value="ECO:0007669"/>
    <property type="project" value="UniProtKB-UniRule"/>
</dbReference>
<dbReference type="CDD" id="cd03284">
    <property type="entry name" value="ABC_MutS1"/>
    <property type="match status" value="1"/>
</dbReference>
<dbReference type="FunFam" id="1.10.1420.10:FF:000001">
    <property type="entry name" value="DNA mismatch repair protein MutS"/>
    <property type="match status" value="1"/>
</dbReference>
<dbReference type="FunFam" id="3.40.1170.10:FF:000001">
    <property type="entry name" value="DNA mismatch repair protein MutS"/>
    <property type="match status" value="1"/>
</dbReference>
<dbReference type="FunFam" id="3.40.50.300:FF:000870">
    <property type="entry name" value="MutS protein homolog 4"/>
    <property type="match status" value="1"/>
</dbReference>
<dbReference type="Gene3D" id="1.10.1420.10">
    <property type="match status" value="2"/>
</dbReference>
<dbReference type="Gene3D" id="6.10.140.430">
    <property type="match status" value="1"/>
</dbReference>
<dbReference type="Gene3D" id="3.40.1170.10">
    <property type="entry name" value="DNA repair protein MutS, domain I"/>
    <property type="match status" value="1"/>
</dbReference>
<dbReference type="Gene3D" id="3.30.420.110">
    <property type="entry name" value="MutS, connector domain"/>
    <property type="match status" value="1"/>
</dbReference>
<dbReference type="Gene3D" id="3.40.50.300">
    <property type="entry name" value="P-loop containing nucleotide triphosphate hydrolases"/>
    <property type="match status" value="1"/>
</dbReference>
<dbReference type="HAMAP" id="MF_00096">
    <property type="entry name" value="MutS"/>
    <property type="match status" value="1"/>
</dbReference>
<dbReference type="InterPro" id="IPR005748">
    <property type="entry name" value="DNA_mismatch_repair_MutS"/>
</dbReference>
<dbReference type="InterPro" id="IPR007695">
    <property type="entry name" value="DNA_mismatch_repair_MutS-lik_N"/>
</dbReference>
<dbReference type="InterPro" id="IPR017261">
    <property type="entry name" value="DNA_mismatch_repair_MutS/MSH"/>
</dbReference>
<dbReference type="InterPro" id="IPR000432">
    <property type="entry name" value="DNA_mismatch_repair_MutS_C"/>
</dbReference>
<dbReference type="InterPro" id="IPR007861">
    <property type="entry name" value="DNA_mismatch_repair_MutS_clamp"/>
</dbReference>
<dbReference type="InterPro" id="IPR007696">
    <property type="entry name" value="DNA_mismatch_repair_MutS_core"/>
</dbReference>
<dbReference type="InterPro" id="IPR016151">
    <property type="entry name" value="DNA_mismatch_repair_MutS_N"/>
</dbReference>
<dbReference type="InterPro" id="IPR036187">
    <property type="entry name" value="DNA_mismatch_repair_MutS_sf"/>
</dbReference>
<dbReference type="InterPro" id="IPR007860">
    <property type="entry name" value="DNA_mmatch_repair_MutS_con_dom"/>
</dbReference>
<dbReference type="InterPro" id="IPR045076">
    <property type="entry name" value="MutS"/>
</dbReference>
<dbReference type="InterPro" id="IPR036678">
    <property type="entry name" value="MutS_con_dom_sf"/>
</dbReference>
<dbReference type="InterPro" id="IPR027417">
    <property type="entry name" value="P-loop_NTPase"/>
</dbReference>
<dbReference type="NCBIfam" id="TIGR01070">
    <property type="entry name" value="mutS1"/>
    <property type="match status" value="1"/>
</dbReference>
<dbReference type="NCBIfam" id="NF003810">
    <property type="entry name" value="PRK05399.1"/>
    <property type="match status" value="1"/>
</dbReference>
<dbReference type="PANTHER" id="PTHR11361:SF34">
    <property type="entry name" value="DNA MISMATCH REPAIR PROTEIN MSH1, MITOCHONDRIAL"/>
    <property type="match status" value="1"/>
</dbReference>
<dbReference type="PANTHER" id="PTHR11361">
    <property type="entry name" value="DNA MISMATCH REPAIR PROTEIN MUTS FAMILY MEMBER"/>
    <property type="match status" value="1"/>
</dbReference>
<dbReference type="Pfam" id="PF01624">
    <property type="entry name" value="MutS_I"/>
    <property type="match status" value="1"/>
</dbReference>
<dbReference type="Pfam" id="PF05188">
    <property type="entry name" value="MutS_II"/>
    <property type="match status" value="1"/>
</dbReference>
<dbReference type="Pfam" id="PF05192">
    <property type="entry name" value="MutS_III"/>
    <property type="match status" value="1"/>
</dbReference>
<dbReference type="Pfam" id="PF05190">
    <property type="entry name" value="MutS_IV"/>
    <property type="match status" value="1"/>
</dbReference>
<dbReference type="Pfam" id="PF00488">
    <property type="entry name" value="MutS_V"/>
    <property type="match status" value="1"/>
</dbReference>
<dbReference type="PIRSF" id="PIRSF037677">
    <property type="entry name" value="DNA_mis_repair_Msh6"/>
    <property type="match status" value="1"/>
</dbReference>
<dbReference type="SMART" id="SM00534">
    <property type="entry name" value="MUTSac"/>
    <property type="match status" value="1"/>
</dbReference>
<dbReference type="SMART" id="SM00533">
    <property type="entry name" value="MUTSd"/>
    <property type="match status" value="1"/>
</dbReference>
<dbReference type="SUPFAM" id="SSF55271">
    <property type="entry name" value="DNA repair protein MutS, domain I"/>
    <property type="match status" value="1"/>
</dbReference>
<dbReference type="SUPFAM" id="SSF53150">
    <property type="entry name" value="DNA repair protein MutS, domain II"/>
    <property type="match status" value="1"/>
</dbReference>
<dbReference type="SUPFAM" id="SSF48334">
    <property type="entry name" value="DNA repair protein MutS, domain III"/>
    <property type="match status" value="1"/>
</dbReference>
<dbReference type="SUPFAM" id="SSF52540">
    <property type="entry name" value="P-loop containing nucleoside triphosphate hydrolases"/>
    <property type="match status" value="1"/>
</dbReference>
<dbReference type="PROSITE" id="PS00486">
    <property type="entry name" value="DNA_MISMATCH_REPAIR_2"/>
    <property type="match status" value="1"/>
</dbReference>
<reference key="1">
    <citation type="journal article" date="2009" name="Appl. Environ. Microbiol.">
        <title>Complete genome sequence of the chemolithoautotrophic marine magnetotactic coccus strain MC-1.</title>
        <authorList>
            <person name="Schubbe S."/>
            <person name="Williams T.J."/>
            <person name="Xie G."/>
            <person name="Kiss H.E."/>
            <person name="Brettin T.S."/>
            <person name="Martinez D."/>
            <person name="Ross C.A."/>
            <person name="Schuler D."/>
            <person name="Cox B.L."/>
            <person name="Nealson K.H."/>
            <person name="Bazylinski D.A."/>
        </authorList>
    </citation>
    <scope>NUCLEOTIDE SEQUENCE [LARGE SCALE GENOMIC DNA]</scope>
    <source>
        <strain>ATCC BAA-1437 / JCM 17883 / MC-1</strain>
    </source>
</reference>
<name>MUTS_MAGMM</name>
<accession>A0L7L5</accession>
<organism>
    <name type="scientific">Magnetococcus marinus (strain ATCC BAA-1437 / JCM 17883 / MC-1)</name>
    <dbReference type="NCBI Taxonomy" id="156889"/>
    <lineage>
        <taxon>Bacteria</taxon>
        <taxon>Pseudomonadati</taxon>
        <taxon>Pseudomonadota</taxon>
        <taxon>Alphaproteobacteria</taxon>
        <taxon>Magnetococcales</taxon>
        <taxon>Magnetococcaceae</taxon>
        <taxon>Magnetococcus</taxon>
    </lineage>
</organism>
<comment type="function">
    <text evidence="1">This protein is involved in the repair of mismatches in DNA. It is possible that it carries out the mismatch recognition step. This protein has a weak ATPase activity.</text>
</comment>
<comment type="similarity">
    <text evidence="1">Belongs to the DNA mismatch repair MutS family.</text>
</comment>
<sequence length="868" mass="97431">MSSPKQTPMIAQYLSIKAAHPETLLFFRMGDFYELFFDDAKQAAEALNIALTSRGKSEGEPIPMAGIPVHARQTYLNKLIEAGFKVAICEQMEPPGASKGPVRREVVRTVTPGTLTEESLLSPRENNYLVSYLPAAKRHPHALAALDLSTGEFFALTLEREDQVAAELSRLEPAELLIPDNWEPEPWLKGWKRCLSRRGSWSFDGKEGARVLLEHFQVTSLESFGVADSPPCLGVCGALLHYCRETQKEALSHITGLSRLHQQEGMVLDETCRRNLELNYNLKDGSRKSSLLGVMDRCITPMGSRLLAQWINRPLQSLDAIATRQESVSWLRENLVAYQDLRERLRMVHDLERFLSRIALRRASPRDLGGLRQTLQCLPQLYAILTPADGHSLAVPSLLRILADHFNGHEALTKQLEQQLADELPLNLKEGETIRLGFDQTLDTLRSLSRDGKSYLTKLEVEEREKTGIPSLKIKYHRSFGYSMEVTKTHLDKVPPRYIQRQTMTNGVRYVTEELKEYEEQLLTAEERMLEREQLLFEALAEQVARQAETLQASARAIATLDVLANFAHIAEERNYCRPLLHEGAVIEINQGRHPVVEQFSDTPFVANDIRLDNRQRTGLITGPNMAGKSTLMRQVALIVLLAHTGACVPAGSAKIGRVDRIFTRVGASDDLAGGRSTFMVEMTETAHILHHASERSLVILDEIGRGTSTYDGLSIAWAVAEHIHTQCQARTLFATHYHELTQLESQLDGVFNLTVEVKEWKDQILFLHTIVRGAADRSYGIHVAQLAGLPRAVTRRAREVLADLEEHAVHHPDSMGQGHAPASQPYQLTLFEDAPPSPALLELKRVDPDELTPKEALEALYRLKELL</sequence>
<keyword id="KW-0067">ATP-binding</keyword>
<keyword id="KW-0227">DNA damage</keyword>
<keyword id="KW-0234">DNA repair</keyword>
<keyword id="KW-0238">DNA-binding</keyword>
<keyword id="KW-0547">Nucleotide-binding</keyword>
<keyword id="KW-1185">Reference proteome</keyword>
<evidence type="ECO:0000255" key="1">
    <source>
        <dbReference type="HAMAP-Rule" id="MF_00096"/>
    </source>
</evidence>
<feature type="chain" id="PRO_0000335175" description="DNA mismatch repair protein MutS">
    <location>
        <begin position="1"/>
        <end position="868"/>
    </location>
</feature>
<feature type="binding site" evidence="1">
    <location>
        <begin position="623"/>
        <end position="630"/>
    </location>
    <ligand>
        <name>ATP</name>
        <dbReference type="ChEBI" id="CHEBI:30616"/>
    </ligand>
</feature>
<protein>
    <recommendedName>
        <fullName evidence="1">DNA mismatch repair protein MutS</fullName>
    </recommendedName>
</protein>
<proteinExistence type="inferred from homology"/>